<feature type="signal peptide" evidence="2">
    <location>
        <begin position="1"/>
        <end position="19"/>
    </location>
</feature>
<feature type="chain" id="PRO_0000433794" description="Adhesion G protein-coupled receptor L4" evidence="2">
    <location>
        <begin position="20"/>
        <end position="726"/>
    </location>
</feature>
<feature type="topological domain" description="Extracellular" evidence="6">
    <location>
        <begin position="20"/>
        <end position="467"/>
    </location>
</feature>
<feature type="transmembrane region" description="Helical; Name=1" evidence="2">
    <location>
        <begin position="468"/>
        <end position="488"/>
    </location>
</feature>
<feature type="topological domain" description="Cytoplasmic" evidence="6">
    <location>
        <begin position="489"/>
        <end position="496"/>
    </location>
</feature>
<feature type="transmembrane region" description="Helical; Name=2" evidence="2">
    <location>
        <begin position="497"/>
        <end position="517"/>
    </location>
</feature>
<feature type="topological domain" description="Extracellular" evidence="6">
    <location>
        <begin position="518"/>
        <end position="535"/>
    </location>
</feature>
<feature type="transmembrane region" description="Helical; Name=3" evidence="2">
    <location>
        <begin position="536"/>
        <end position="556"/>
    </location>
</feature>
<feature type="topological domain" description="Cytoplasmic" evidence="6">
    <location>
        <begin position="557"/>
        <end position="568"/>
    </location>
</feature>
<feature type="transmembrane region" description="Helical; Name=4" evidence="2">
    <location>
        <begin position="569"/>
        <end position="589"/>
    </location>
</feature>
<feature type="topological domain" description="Extracellular" evidence="6">
    <location>
        <begin position="590"/>
        <end position="609"/>
    </location>
</feature>
<feature type="transmembrane region" description="Helical; Name=5" evidence="2">
    <location>
        <begin position="610"/>
        <end position="630"/>
    </location>
</feature>
<feature type="topological domain" description="Cytoplasmic" evidence="6">
    <location>
        <begin position="631"/>
        <end position="654"/>
    </location>
</feature>
<feature type="transmembrane region" description="Helical; Name=6" evidence="2">
    <location>
        <begin position="655"/>
        <end position="675"/>
    </location>
</feature>
<feature type="topological domain" description="Extracellular" evidence="6">
    <location>
        <begin position="676"/>
        <end position="682"/>
    </location>
</feature>
<feature type="transmembrane region" description="Helical; Name=7" evidence="2">
    <location>
        <begin position="683"/>
        <end position="703"/>
    </location>
</feature>
<feature type="domain" description="EGF-like 1; calcium-binding" evidence="3">
    <location>
        <begin position="52"/>
        <end position="90"/>
    </location>
</feature>
<feature type="domain" description="EGF-like 2; calcium-binding" evidence="3">
    <location>
        <begin position="102"/>
        <end position="139"/>
    </location>
</feature>
<feature type="domain" description="GAIN-B" evidence="4">
    <location>
        <begin position="282"/>
        <end position="456"/>
    </location>
</feature>
<feature type="region of interest" description="GPS" evidence="4">
    <location>
        <begin position="408"/>
        <end position="456"/>
    </location>
</feature>
<feature type="site" description="Cleavage; by autolysis" evidence="4">
    <location>
        <begin position="443"/>
        <end position="444"/>
    </location>
</feature>
<feature type="disulfide bond" evidence="3">
    <location>
        <begin position="56"/>
        <end position="69"/>
    </location>
</feature>
<feature type="disulfide bond" evidence="3">
    <location>
        <begin position="63"/>
        <end position="78"/>
    </location>
</feature>
<feature type="disulfide bond" evidence="3">
    <location>
        <begin position="106"/>
        <end position="118"/>
    </location>
</feature>
<feature type="disulfide bond" evidence="3">
    <location>
        <begin position="112"/>
        <end position="127"/>
    </location>
</feature>
<feature type="disulfide bond" evidence="4">
    <location>
        <begin position="408"/>
        <end position="438"/>
    </location>
</feature>
<feature type="disulfide bond" evidence="4">
    <location>
        <begin position="426"/>
        <end position="440"/>
    </location>
</feature>
<feature type="sequence conflict" description="In Ref. 2; AAH55171." evidence="6" ref="2">
    <location>
        <position position="153"/>
    </location>
</feature>
<feature type="sequence conflict" description="In Ref. 2; AAH55171." evidence="6" ref="2">
    <original>S</original>
    <variation>F</variation>
    <location>
        <position position="214"/>
    </location>
</feature>
<feature type="sequence conflict" description="In Ref. 2; AAH55171." evidence="6" ref="2">
    <original>M</original>
    <variation>K</variation>
    <location>
        <position position="257"/>
    </location>
</feature>
<feature type="sequence conflict" description="In Ref. 2; AAH55171." evidence="6" ref="2">
    <original>F</original>
    <variation>S</variation>
    <location>
        <position position="410"/>
    </location>
</feature>
<feature type="sequence conflict" description="In Ref. 2; AAH55171." evidence="6" ref="2">
    <original>A</original>
    <variation>P</variation>
    <location>
        <position position="615"/>
    </location>
</feature>
<accession>Q7SY09</accession>
<accession>F1QUS5</accession>
<reference key="1">
    <citation type="journal article" date="2013" name="Nature">
        <title>The zebrafish reference genome sequence and its relationship to the human genome.</title>
        <authorList>
            <person name="Howe K."/>
            <person name="Clark M.D."/>
            <person name="Torroja C.F."/>
            <person name="Torrance J."/>
            <person name="Berthelot C."/>
            <person name="Muffato M."/>
            <person name="Collins J.E."/>
            <person name="Humphray S."/>
            <person name="McLaren K."/>
            <person name="Matthews L."/>
            <person name="McLaren S."/>
            <person name="Sealy I."/>
            <person name="Caccamo M."/>
            <person name="Churcher C."/>
            <person name="Scott C."/>
            <person name="Barrett J.C."/>
            <person name="Koch R."/>
            <person name="Rauch G.J."/>
            <person name="White S."/>
            <person name="Chow W."/>
            <person name="Kilian B."/>
            <person name="Quintais L.T."/>
            <person name="Guerra-Assuncao J.A."/>
            <person name="Zhou Y."/>
            <person name="Gu Y."/>
            <person name="Yen J."/>
            <person name="Vogel J.H."/>
            <person name="Eyre T."/>
            <person name="Redmond S."/>
            <person name="Banerjee R."/>
            <person name="Chi J."/>
            <person name="Fu B."/>
            <person name="Langley E."/>
            <person name="Maguire S.F."/>
            <person name="Laird G.K."/>
            <person name="Lloyd D."/>
            <person name="Kenyon E."/>
            <person name="Donaldson S."/>
            <person name="Sehra H."/>
            <person name="Almeida-King J."/>
            <person name="Loveland J."/>
            <person name="Trevanion S."/>
            <person name="Jones M."/>
            <person name="Quail M."/>
            <person name="Willey D."/>
            <person name="Hunt A."/>
            <person name="Burton J."/>
            <person name="Sims S."/>
            <person name="McLay K."/>
            <person name="Plumb B."/>
            <person name="Davis J."/>
            <person name="Clee C."/>
            <person name="Oliver K."/>
            <person name="Clark R."/>
            <person name="Riddle C."/>
            <person name="Elliot D."/>
            <person name="Threadgold G."/>
            <person name="Harden G."/>
            <person name="Ware D."/>
            <person name="Begum S."/>
            <person name="Mortimore B."/>
            <person name="Kerry G."/>
            <person name="Heath P."/>
            <person name="Phillimore B."/>
            <person name="Tracey A."/>
            <person name="Corby N."/>
            <person name="Dunn M."/>
            <person name="Johnson C."/>
            <person name="Wood J."/>
            <person name="Clark S."/>
            <person name="Pelan S."/>
            <person name="Griffiths G."/>
            <person name="Smith M."/>
            <person name="Glithero R."/>
            <person name="Howden P."/>
            <person name="Barker N."/>
            <person name="Lloyd C."/>
            <person name="Stevens C."/>
            <person name="Harley J."/>
            <person name="Holt K."/>
            <person name="Panagiotidis G."/>
            <person name="Lovell J."/>
            <person name="Beasley H."/>
            <person name="Henderson C."/>
            <person name="Gordon D."/>
            <person name="Auger K."/>
            <person name="Wright D."/>
            <person name="Collins J."/>
            <person name="Raisen C."/>
            <person name="Dyer L."/>
            <person name="Leung K."/>
            <person name="Robertson L."/>
            <person name="Ambridge K."/>
            <person name="Leongamornlert D."/>
            <person name="McGuire S."/>
            <person name="Gilderthorp R."/>
            <person name="Griffiths C."/>
            <person name="Manthravadi D."/>
            <person name="Nichol S."/>
            <person name="Barker G."/>
            <person name="Whitehead S."/>
            <person name="Kay M."/>
            <person name="Brown J."/>
            <person name="Murnane C."/>
            <person name="Gray E."/>
            <person name="Humphries M."/>
            <person name="Sycamore N."/>
            <person name="Barker D."/>
            <person name="Saunders D."/>
            <person name="Wallis J."/>
            <person name="Babbage A."/>
            <person name="Hammond S."/>
            <person name="Mashreghi-Mohammadi M."/>
            <person name="Barr L."/>
            <person name="Martin S."/>
            <person name="Wray P."/>
            <person name="Ellington A."/>
            <person name="Matthews N."/>
            <person name="Ellwood M."/>
            <person name="Woodmansey R."/>
            <person name="Clark G."/>
            <person name="Cooper J."/>
            <person name="Tromans A."/>
            <person name="Grafham D."/>
            <person name="Skuce C."/>
            <person name="Pandian R."/>
            <person name="Andrews R."/>
            <person name="Harrison E."/>
            <person name="Kimberley A."/>
            <person name="Garnett J."/>
            <person name="Fosker N."/>
            <person name="Hall R."/>
            <person name="Garner P."/>
            <person name="Kelly D."/>
            <person name="Bird C."/>
            <person name="Palmer S."/>
            <person name="Gehring I."/>
            <person name="Berger A."/>
            <person name="Dooley C.M."/>
            <person name="Ersan-Urun Z."/>
            <person name="Eser C."/>
            <person name="Geiger H."/>
            <person name="Geisler M."/>
            <person name="Karotki L."/>
            <person name="Kirn A."/>
            <person name="Konantz J."/>
            <person name="Konantz M."/>
            <person name="Oberlander M."/>
            <person name="Rudolph-Geiger S."/>
            <person name="Teucke M."/>
            <person name="Lanz C."/>
            <person name="Raddatz G."/>
            <person name="Osoegawa K."/>
            <person name="Zhu B."/>
            <person name="Rapp A."/>
            <person name="Widaa S."/>
            <person name="Langford C."/>
            <person name="Yang F."/>
            <person name="Schuster S.C."/>
            <person name="Carter N.P."/>
            <person name="Harrow J."/>
            <person name="Ning Z."/>
            <person name="Herrero J."/>
            <person name="Searle S.M."/>
            <person name="Enright A."/>
            <person name="Geisler R."/>
            <person name="Plasterk R.H."/>
            <person name="Lee C."/>
            <person name="Westerfield M."/>
            <person name="de Jong P.J."/>
            <person name="Zon L.I."/>
            <person name="Postlethwait J.H."/>
            <person name="Nusslein-Volhard C."/>
            <person name="Hubbard T.J."/>
            <person name="Roest Crollius H."/>
            <person name="Rogers J."/>
            <person name="Stemple D.L."/>
        </authorList>
    </citation>
    <scope>NUCLEOTIDE SEQUENCE [LARGE SCALE GENOMIC DNA]</scope>
    <source>
        <strain>Tuebingen</strain>
    </source>
</reference>
<reference key="2">
    <citation type="submission" date="2003-07" db="EMBL/GenBank/DDBJ databases">
        <authorList>
            <consortium name="NIH - Zebrafish Gene Collection (ZGC) project"/>
        </authorList>
    </citation>
    <scope>NUCLEOTIDE SEQUENCE [LARGE SCALE MRNA]</scope>
</reference>
<reference key="3">
    <citation type="journal article" date="2013" name="Cancer Cell">
        <title>A core human primary tumor angiogenesis signature identifies the endothelial orphan receptor ELTD1 as a key regulator of angiogenesis.</title>
        <authorList>
            <person name="Masiero M."/>
            <person name="Simoes F.C."/>
            <person name="Han H.D."/>
            <person name="Snell C."/>
            <person name="Peterkin T."/>
            <person name="Bridges E."/>
            <person name="Mangala L.S."/>
            <person name="Wu S.Y."/>
            <person name="Pradeep S."/>
            <person name="Li D."/>
            <person name="Han C."/>
            <person name="Dalton H."/>
            <person name="Lopez-Berestein G."/>
            <person name="Tuynman J.B."/>
            <person name="Mortensen N."/>
            <person name="Li J.L."/>
            <person name="Patient R."/>
            <person name="Sood A.K."/>
            <person name="Banham A.H."/>
            <person name="Harris A.L."/>
            <person name="Buffa F.M."/>
        </authorList>
    </citation>
    <scope>FUNCTION</scope>
    <scope>DEVELOPMENTAL STAGE</scope>
    <scope>DISRUPTION PHENOTYPE</scope>
</reference>
<sequence>MKLLLFAAWFSSLLDPCRFLDICQSCHPNADCDDICKCRTGYTGNGISDCRDDNECETVPEICGLHANCTNYVGGYYCNCLSGFISNGTEQFQTNDGTSCNDINECEEDRKCGPNSKCHNNIGSFICSCLRGYTSPAGPWFMPNHGTDCIENSKIHCHQDHKCTKETVNSTLERMTNLSISERLKEIRYQTSAALSPVLLISYIEAMVSSKLNSGDVSKDSKEHVNETITNLVFSVNNLVEKDEKVEWKKINEDLRMYYVTKLLHTAEKETLALSAGYTHATQMQVHAGDVEMKLYTFEPRQAQKHPLSANIQGNSISLSTKKARHANNNGSTSVVFLIYHSIGDLLKPADDPGVADYSRYAAAGEITVNSPVIAAAISNQKTLPLNDVTFTLKHTQEIDPARDETKCAFWEYSPSMMGHWSLDGCIRTRVNTTHTSCSCNHLTHFAILMSSARANLLAHYNVLTRITQLGMVISLICLSMCIFTFWFFRDIQNTRTTIHKNLCCSLFMAQFIFLIGINKSAHKWFCSLIAGLLHYFFLAAFAWMCIEGIHLYLIVVGVIYNKGFLHRNFYAFGYGSPAVVVAISATLGYKYYGTSSVCWLSTENNFIWSFIGPAILIILVNLLAFAVIIYKVYRHTAVKKPEISHYENIRSCARGAIALLFVLGVTWAFGVMYILYETTLTAYLFTFANVFQGMFIFIFLCVLSRRIQEEYYRLFKNMPCCFECLR</sequence>
<dbReference type="EMBL" id="CU464206">
    <property type="status" value="NOT_ANNOTATED_CDS"/>
    <property type="molecule type" value="Genomic_DNA"/>
</dbReference>
<dbReference type="EMBL" id="BC055171">
    <property type="protein sequence ID" value="AAH55171.1"/>
    <property type="molecule type" value="mRNA"/>
</dbReference>
<dbReference type="SMR" id="Q7SY09"/>
<dbReference type="FunCoup" id="Q7SY09">
    <property type="interactions" value="608"/>
</dbReference>
<dbReference type="STRING" id="7955.ENSDARP00000014501"/>
<dbReference type="MEROPS" id="P02.013"/>
<dbReference type="PaxDb" id="7955-ENSDARP00000014501"/>
<dbReference type="AGR" id="ZFIN:ZDB-GENE-040426-2689"/>
<dbReference type="ZFIN" id="ZDB-GENE-040426-2689">
    <property type="gene designation" value="adgrl4"/>
</dbReference>
<dbReference type="eggNOG" id="KOG1217">
    <property type="taxonomic scope" value="Eukaryota"/>
</dbReference>
<dbReference type="eggNOG" id="KOG4193">
    <property type="taxonomic scope" value="Eukaryota"/>
</dbReference>
<dbReference type="InParanoid" id="Q7SY09"/>
<dbReference type="PhylomeDB" id="Q7SY09"/>
<dbReference type="TreeFam" id="TF316380"/>
<dbReference type="PRO" id="PR:Q7SY09"/>
<dbReference type="Proteomes" id="UP000000437">
    <property type="component" value="Unplaced"/>
</dbReference>
<dbReference type="GO" id="GO:0005886">
    <property type="term" value="C:plasma membrane"/>
    <property type="evidence" value="ECO:0000318"/>
    <property type="project" value="GO_Central"/>
</dbReference>
<dbReference type="GO" id="GO:0005509">
    <property type="term" value="F:calcium ion binding"/>
    <property type="evidence" value="ECO:0007669"/>
    <property type="project" value="InterPro"/>
</dbReference>
<dbReference type="GO" id="GO:0004930">
    <property type="term" value="F:G protein-coupled receptor activity"/>
    <property type="evidence" value="ECO:0000318"/>
    <property type="project" value="GO_Central"/>
</dbReference>
<dbReference type="GO" id="GO:0007189">
    <property type="term" value="P:adenylate cyclase-activating G protein-coupled receptor signaling pathway"/>
    <property type="evidence" value="ECO:0000318"/>
    <property type="project" value="GO_Central"/>
</dbReference>
<dbReference type="GO" id="GO:0007166">
    <property type="term" value="P:cell surface receptor signaling pathway"/>
    <property type="evidence" value="ECO:0007669"/>
    <property type="project" value="InterPro"/>
</dbReference>
<dbReference type="CDD" id="cd15437">
    <property type="entry name" value="7tmB2_ETL"/>
    <property type="match status" value="1"/>
</dbReference>
<dbReference type="CDD" id="cd00054">
    <property type="entry name" value="EGF_CA"/>
    <property type="match status" value="2"/>
</dbReference>
<dbReference type="FunFam" id="2.60.220.50:FF:000036">
    <property type="entry name" value="Adhesion G protein-coupled receptor L4"/>
    <property type="match status" value="1"/>
</dbReference>
<dbReference type="FunFam" id="1.20.1070.10:FF:000064">
    <property type="entry name" value="adhesion G protein-coupled receptor L4 isoform X1"/>
    <property type="match status" value="1"/>
</dbReference>
<dbReference type="FunFam" id="2.10.25.10:FF:000038">
    <property type="entry name" value="Fibrillin 2"/>
    <property type="match status" value="2"/>
</dbReference>
<dbReference type="Gene3D" id="2.60.220.50">
    <property type="match status" value="1"/>
</dbReference>
<dbReference type="Gene3D" id="2.10.25.10">
    <property type="entry name" value="Laminin"/>
    <property type="match status" value="2"/>
</dbReference>
<dbReference type="Gene3D" id="1.20.1070.10">
    <property type="entry name" value="Rhodopsin 7-helix transmembrane proteins"/>
    <property type="match status" value="1"/>
</dbReference>
<dbReference type="InterPro" id="IPR001881">
    <property type="entry name" value="EGF-like_Ca-bd_dom"/>
</dbReference>
<dbReference type="InterPro" id="IPR000742">
    <property type="entry name" value="EGF-like_dom"/>
</dbReference>
<dbReference type="InterPro" id="IPR000152">
    <property type="entry name" value="EGF-type_Asp/Asn_hydroxyl_site"/>
</dbReference>
<dbReference type="InterPro" id="IPR018097">
    <property type="entry name" value="EGF_Ca-bd_CS"/>
</dbReference>
<dbReference type="InterPro" id="IPR057244">
    <property type="entry name" value="GAIN_B"/>
</dbReference>
<dbReference type="InterPro" id="IPR032471">
    <property type="entry name" value="GAIN_dom_N"/>
</dbReference>
<dbReference type="InterPro" id="IPR046338">
    <property type="entry name" value="GAIN_dom_sf"/>
</dbReference>
<dbReference type="InterPro" id="IPR017981">
    <property type="entry name" value="GPCR_2-like_7TM"/>
</dbReference>
<dbReference type="InterPro" id="IPR000832">
    <property type="entry name" value="GPCR_2_secretin-like"/>
</dbReference>
<dbReference type="InterPro" id="IPR017983">
    <property type="entry name" value="GPCR_2_secretin-like_CS"/>
</dbReference>
<dbReference type="InterPro" id="IPR000203">
    <property type="entry name" value="GPS"/>
</dbReference>
<dbReference type="InterPro" id="IPR049883">
    <property type="entry name" value="NOTCH1_EGF-like"/>
</dbReference>
<dbReference type="PANTHER" id="PTHR12011:SF59">
    <property type="entry name" value="ADHESION G PROTEIN-COUPLED RECEPTOR L4"/>
    <property type="match status" value="1"/>
</dbReference>
<dbReference type="PANTHER" id="PTHR12011">
    <property type="entry name" value="ADHESION G-PROTEIN COUPLED RECEPTOR"/>
    <property type="match status" value="1"/>
</dbReference>
<dbReference type="Pfam" id="PF00002">
    <property type="entry name" value="7tm_2"/>
    <property type="match status" value="1"/>
</dbReference>
<dbReference type="Pfam" id="PF07645">
    <property type="entry name" value="EGF_CA"/>
    <property type="match status" value="2"/>
</dbReference>
<dbReference type="Pfam" id="PF16489">
    <property type="entry name" value="GAIN"/>
    <property type="match status" value="1"/>
</dbReference>
<dbReference type="Pfam" id="PF01825">
    <property type="entry name" value="GPS"/>
    <property type="match status" value="1"/>
</dbReference>
<dbReference type="PRINTS" id="PR00249">
    <property type="entry name" value="GPCRSECRETIN"/>
</dbReference>
<dbReference type="SMART" id="SM00181">
    <property type="entry name" value="EGF"/>
    <property type="match status" value="3"/>
</dbReference>
<dbReference type="SMART" id="SM00179">
    <property type="entry name" value="EGF_CA"/>
    <property type="match status" value="2"/>
</dbReference>
<dbReference type="SMART" id="SM00303">
    <property type="entry name" value="GPS"/>
    <property type="match status" value="1"/>
</dbReference>
<dbReference type="SUPFAM" id="SSF57196">
    <property type="entry name" value="EGF/Laminin"/>
    <property type="match status" value="2"/>
</dbReference>
<dbReference type="SUPFAM" id="SSF81321">
    <property type="entry name" value="Family A G protein-coupled receptor-like"/>
    <property type="match status" value="1"/>
</dbReference>
<dbReference type="PROSITE" id="PS00010">
    <property type="entry name" value="ASX_HYDROXYL"/>
    <property type="match status" value="2"/>
</dbReference>
<dbReference type="PROSITE" id="PS01186">
    <property type="entry name" value="EGF_2"/>
    <property type="match status" value="1"/>
</dbReference>
<dbReference type="PROSITE" id="PS50026">
    <property type="entry name" value="EGF_3"/>
    <property type="match status" value="2"/>
</dbReference>
<dbReference type="PROSITE" id="PS01187">
    <property type="entry name" value="EGF_CA"/>
    <property type="match status" value="2"/>
</dbReference>
<dbReference type="PROSITE" id="PS00650">
    <property type="entry name" value="G_PROTEIN_RECEP_F2_2"/>
    <property type="match status" value="1"/>
</dbReference>
<dbReference type="PROSITE" id="PS50261">
    <property type="entry name" value="G_PROTEIN_RECEP_F2_4"/>
    <property type="match status" value="1"/>
</dbReference>
<dbReference type="PROSITE" id="PS50221">
    <property type="entry name" value="GAIN_B"/>
    <property type="match status" value="1"/>
</dbReference>
<evidence type="ECO:0000250" key="1">
    <source>
        <dbReference type="UniProtKB" id="Q9HBW9"/>
    </source>
</evidence>
<evidence type="ECO:0000255" key="2"/>
<evidence type="ECO:0000255" key="3">
    <source>
        <dbReference type="PROSITE-ProRule" id="PRU00076"/>
    </source>
</evidence>
<evidence type="ECO:0000255" key="4">
    <source>
        <dbReference type="PROSITE-ProRule" id="PRU00098"/>
    </source>
</evidence>
<evidence type="ECO:0000269" key="5">
    <source>
    </source>
</evidence>
<evidence type="ECO:0000305" key="6"/>
<evidence type="ECO:0000312" key="7">
    <source>
        <dbReference type="EMBL" id="AAH55171.1"/>
    </source>
</evidence>
<evidence type="ECO:0000312" key="8">
    <source>
        <dbReference type="ZFIN" id="ZDB-GENE-040426-2689"/>
    </source>
</evidence>
<name>AGRL4_DANRE</name>
<comment type="function">
    <text evidence="5">Orphan receptor that plays a role in vessel formation.</text>
</comment>
<comment type="subunit">
    <text evidence="4">Heterodimer of 2 chains generated by proteolytic processing; the large extracellular N-terminal fragment and the membrane-bound C-terminal fragment predominantly remain associated and non-covalently linked.</text>
</comment>
<comment type="subcellular location">
    <subcellularLocation>
        <location evidence="1">Cell membrane</location>
        <topology evidence="2">Multi-pass membrane protein</topology>
    </subcellularLocation>
</comment>
<comment type="developmental stage">
    <text evidence="5">During gastrulation, expression is ubiquitously detected throughout the embryo. During development is detected in epithelial cells, blood precursor cells and developing vessels. By 48 hpf, weaker expression is still detected in epithelials cells.</text>
</comment>
<comment type="PTM">
    <text evidence="4">Autoproteolytically processed at the GPS region of the GAIN-B domain; this cleavage modulates receptor activity.</text>
</comment>
<comment type="disruption phenotype">
    <text evidence="5">Morpholino knockdown of the protein causes dramatic vascular impairment in embryos.</text>
</comment>
<comment type="similarity">
    <text evidence="6">Belongs to the G-protein coupled receptor 2 family. Adhesion G-protein coupled receptor (ADGR) subfamily.</text>
</comment>
<protein>
    <recommendedName>
        <fullName>Adhesion G protein-coupled receptor L4</fullName>
    </recommendedName>
</protein>
<organism evidence="7">
    <name type="scientific">Danio rerio</name>
    <name type="common">Zebrafish</name>
    <name type="synonym">Brachydanio rerio</name>
    <dbReference type="NCBI Taxonomy" id="7955"/>
    <lineage>
        <taxon>Eukaryota</taxon>
        <taxon>Metazoa</taxon>
        <taxon>Chordata</taxon>
        <taxon>Craniata</taxon>
        <taxon>Vertebrata</taxon>
        <taxon>Euteleostomi</taxon>
        <taxon>Actinopterygii</taxon>
        <taxon>Neopterygii</taxon>
        <taxon>Teleostei</taxon>
        <taxon>Ostariophysi</taxon>
        <taxon>Cypriniformes</taxon>
        <taxon>Danionidae</taxon>
        <taxon>Danioninae</taxon>
        <taxon>Danio</taxon>
    </lineage>
</organism>
<proteinExistence type="evidence at transcript level"/>
<keyword id="KW-0106">Calcium</keyword>
<keyword id="KW-1003">Cell membrane</keyword>
<keyword id="KW-1015">Disulfide bond</keyword>
<keyword id="KW-0245">EGF-like domain</keyword>
<keyword id="KW-0472">Membrane</keyword>
<keyword id="KW-1185">Reference proteome</keyword>
<keyword id="KW-0677">Repeat</keyword>
<keyword id="KW-0732">Signal</keyword>
<keyword id="KW-0812">Transmembrane</keyword>
<keyword id="KW-1133">Transmembrane helix</keyword>
<gene>
    <name evidence="8" type="primary">adgrl4</name>
    <name evidence="8" type="synonym">eltd1</name>
    <name evidence="7" type="synonym">zgc:63629</name>
</gene>